<accession>P0CF86</accession>
<accession>A0A385XJL7</accession>
<accession>P52136</accession>
<accession>P76606</accession>
<accession>P77012</accession>
<protein>
    <recommendedName>
        <fullName>Putative arsenate reductase-like protein</fullName>
    </recommendedName>
</protein>
<gene>
    <name type="primary">yfjU</name>
    <name type="ordered locus">b2638</name>
</gene>
<feature type="chain" id="PRO_0000162582" description="Putative arsenate reductase-like protein">
    <location>
        <begin position="1"/>
        <end position="104"/>
    </location>
</feature>
<feature type="active site" evidence="1">
    <location>
        <position position="12"/>
    </location>
</feature>
<proteinExistence type="inferred from homology"/>
<comment type="miscellaneous">
    <text evidence="2">Encoded by the CP4-57 prophage.</text>
</comment>
<comment type="miscellaneous">
    <text evidence="2">Is missing about 40 C-terminal residues compared to orthologs.</text>
</comment>
<comment type="similarity">
    <text evidence="2">Belongs to the ArsC family.</text>
</comment>
<keyword id="KW-0059">Arsenical resistance</keyword>
<keyword id="KW-0560">Oxidoreductase</keyword>
<keyword id="KW-1185">Reference proteome</keyword>
<organism>
    <name type="scientific">Escherichia coli (strain K12)</name>
    <dbReference type="NCBI Taxonomy" id="83333"/>
    <lineage>
        <taxon>Bacteria</taxon>
        <taxon>Pseudomonadati</taxon>
        <taxon>Pseudomonadota</taxon>
        <taxon>Gammaproteobacteria</taxon>
        <taxon>Enterobacterales</taxon>
        <taxon>Enterobacteriaceae</taxon>
        <taxon>Escherichia</taxon>
    </lineage>
</organism>
<evidence type="ECO:0000255" key="1">
    <source>
        <dbReference type="PROSITE-ProRule" id="PRU01282"/>
    </source>
</evidence>
<evidence type="ECO:0000305" key="2"/>
<sequence>MSNITIYHNPACGTSRNTLEMLHNNGNEPTIINYLDMPPTRDELIKLISDIFSDKIIECIREQCHLMPALSLNVIGHVDIRSIHSYLFNFNEKVSPSHGFIKNG</sequence>
<reference key="1">
    <citation type="journal article" date="1997" name="Science">
        <title>The complete genome sequence of Escherichia coli K-12.</title>
        <authorList>
            <person name="Blattner F.R."/>
            <person name="Plunkett G. III"/>
            <person name="Bloch C.A."/>
            <person name="Perna N.T."/>
            <person name="Burland V."/>
            <person name="Riley M."/>
            <person name="Collado-Vides J."/>
            <person name="Glasner J.D."/>
            <person name="Rode C.K."/>
            <person name="Mayhew G.F."/>
            <person name="Gregor J."/>
            <person name="Davis N.W."/>
            <person name="Kirkpatrick H.A."/>
            <person name="Goeden M.A."/>
            <person name="Rose D.J."/>
            <person name="Mau B."/>
            <person name="Shao Y."/>
        </authorList>
    </citation>
    <scope>NUCLEOTIDE SEQUENCE [LARGE SCALE GENOMIC DNA]</scope>
    <source>
        <strain>K12 / MG1655 / ATCC 47076</strain>
    </source>
</reference>
<dbReference type="EMBL" id="U00096">
    <property type="protein sequence ID" value="AYC08235.1"/>
    <property type="molecule type" value="Genomic_DNA"/>
</dbReference>
<dbReference type="SMR" id="P0CF86"/>
<dbReference type="FunCoup" id="P0CF86">
    <property type="interactions" value="29"/>
</dbReference>
<dbReference type="jPOST" id="P0CF86"/>
<dbReference type="EnsemblBacteria" id="AYC08235">
    <property type="protein sequence ID" value="AYC08235"/>
    <property type="gene ID" value="b2638"/>
</dbReference>
<dbReference type="KEGG" id="ecoc:C3026_14590"/>
<dbReference type="PATRIC" id="fig|83333.103.peg.3523"/>
<dbReference type="EchoBASE" id="EB2999"/>
<dbReference type="InParanoid" id="P0CF86"/>
<dbReference type="OrthoDB" id="6637472at2"/>
<dbReference type="PhylomeDB" id="P0CF86"/>
<dbReference type="BioCyc" id="EcoCyc:G7373-MONOMER"/>
<dbReference type="PRO" id="PR:P0CF86"/>
<dbReference type="Proteomes" id="UP000000625">
    <property type="component" value="Chromosome"/>
</dbReference>
<dbReference type="GO" id="GO:0016491">
    <property type="term" value="F:oxidoreductase activity"/>
    <property type="evidence" value="ECO:0007669"/>
    <property type="project" value="UniProtKB-KW"/>
</dbReference>
<dbReference type="GO" id="GO:0046685">
    <property type="term" value="P:response to arsenic-containing substance"/>
    <property type="evidence" value="ECO:0000318"/>
    <property type="project" value="GO_Central"/>
</dbReference>
<dbReference type="Gene3D" id="3.40.30.10">
    <property type="entry name" value="Glutaredoxin"/>
    <property type="match status" value="1"/>
</dbReference>
<dbReference type="InterPro" id="IPR006660">
    <property type="entry name" value="Arsenate_reductase-like"/>
</dbReference>
<dbReference type="InterPro" id="IPR036249">
    <property type="entry name" value="Thioredoxin-like_sf"/>
</dbReference>
<dbReference type="PANTHER" id="PTHR30041">
    <property type="entry name" value="ARSENATE REDUCTASE"/>
    <property type="match status" value="1"/>
</dbReference>
<dbReference type="PANTHER" id="PTHR30041:SF5">
    <property type="entry name" value="ARSENATE REDUCTASE-RELATED"/>
    <property type="match status" value="1"/>
</dbReference>
<dbReference type="SUPFAM" id="SSF52833">
    <property type="entry name" value="Thioredoxin-like"/>
    <property type="match status" value="1"/>
</dbReference>
<dbReference type="PROSITE" id="PS51353">
    <property type="entry name" value="ARSC"/>
    <property type="match status" value="1"/>
</dbReference>
<name>YFJU_ECOLI</name>